<name>DHE4_SCHPO</name>
<feature type="chain" id="PRO_0000182794" description="NADP-specific glutamate dehydrogenase">
    <location>
        <begin position="1"/>
        <end position="451"/>
    </location>
</feature>
<feature type="active site" evidence="2">
    <location>
        <position position="113"/>
    </location>
</feature>
<feature type="modified residue" description="Phosphoserine" evidence="3">
    <location>
        <position position="252"/>
    </location>
</feature>
<sequence length="451" mass="48790">MSTPYEPEFQQAYKEIVGSIESSKLFEVHPELKRVLPIISIPERVLEFRVTWEDDKGNCRVNTGYRVQFNSALGPYKGGLRFHPSVNLSILKFLGFEQIFKNALTGLPMGGGKGGSDFDPKGKSDNEIRRFSQAFMRQLFRYIGPQTDVPAGDIGVTGFVVMHMFGEYKRLRNEYSGVVTGKHMLTGGSNIRPEATGYGVVYYVKHMIEHRTKGAETLKGKRVAISGSGNVAQYAALKCIQEGAIVKSISDSKGVLIAKTAEGLVPEEIHEIMALKEKRASIADSASLCKKHHYIAGARPWTNVGEIDIALPCATQNEVSGEEAAALIKQGCRYVAEGSNMGSSAEAVEVFEKSRASGEGCWLAPGKAANAGGVAVSGLEMAQNAQFSTWTHAEVDAKLAGIMQNIFEQSTDVASKYCDSGSNNIPSLVDGANIAGFLKVATAMQAVGDWW</sequence>
<protein>
    <recommendedName>
        <fullName>NADP-specific glutamate dehydrogenase</fullName>
        <shortName>NADP-GDH</shortName>
        <ecNumber>1.4.1.4</ecNumber>
    </recommendedName>
    <alternativeName>
        <fullName>NADP-dependent glutamate dehydrogenase</fullName>
    </alternativeName>
</protein>
<dbReference type="EC" id="1.4.1.4"/>
<dbReference type="EMBL" id="CU329672">
    <property type="protein sequence ID" value="CAA21868.1"/>
    <property type="molecule type" value="Genomic_DNA"/>
</dbReference>
<dbReference type="EMBL" id="D89153">
    <property type="protein sequence ID" value="BAA13815.1"/>
    <property type="molecule type" value="mRNA"/>
</dbReference>
<dbReference type="PIR" id="T41492">
    <property type="entry name" value="T41492"/>
</dbReference>
<dbReference type="RefSeq" id="NP_588184.1">
    <property type="nucleotide sequence ID" value="NM_001023174.2"/>
</dbReference>
<dbReference type="SMR" id="P78804"/>
<dbReference type="BioGRID" id="275719">
    <property type="interactions" value="47"/>
</dbReference>
<dbReference type="FunCoup" id="P78804">
    <property type="interactions" value="377"/>
</dbReference>
<dbReference type="STRING" id="284812.P78804"/>
<dbReference type="iPTMnet" id="P78804"/>
<dbReference type="PaxDb" id="4896-SPCC622.12c.1"/>
<dbReference type="EnsemblFungi" id="SPCC622.12c.1">
    <property type="protein sequence ID" value="SPCC622.12c.1:pep"/>
    <property type="gene ID" value="SPCC622.12c"/>
</dbReference>
<dbReference type="GeneID" id="2539147"/>
<dbReference type="KEGG" id="spo:2539147"/>
<dbReference type="PomBase" id="SPCC622.12c">
    <property type="gene designation" value="gdh1"/>
</dbReference>
<dbReference type="VEuPathDB" id="FungiDB:SPCC622.12c"/>
<dbReference type="eggNOG" id="KOG2250">
    <property type="taxonomic scope" value="Eukaryota"/>
</dbReference>
<dbReference type="HOGENOM" id="CLU_025763_2_1_1"/>
<dbReference type="InParanoid" id="P78804"/>
<dbReference type="OMA" id="PCFAAFP"/>
<dbReference type="PhylomeDB" id="P78804"/>
<dbReference type="PRO" id="PR:P78804"/>
<dbReference type="Proteomes" id="UP000002485">
    <property type="component" value="Chromosome III"/>
</dbReference>
<dbReference type="GO" id="GO:0005829">
    <property type="term" value="C:cytosol"/>
    <property type="evidence" value="ECO:0007005"/>
    <property type="project" value="PomBase"/>
</dbReference>
<dbReference type="GO" id="GO:0005739">
    <property type="term" value="C:mitochondrion"/>
    <property type="evidence" value="ECO:0000266"/>
    <property type="project" value="PomBase"/>
</dbReference>
<dbReference type="GO" id="GO:0005634">
    <property type="term" value="C:nucleus"/>
    <property type="evidence" value="ECO:0000266"/>
    <property type="project" value="PomBase"/>
</dbReference>
<dbReference type="GO" id="GO:0004354">
    <property type="term" value="F:glutamate dehydrogenase (NADP+) activity"/>
    <property type="evidence" value="ECO:0000314"/>
    <property type="project" value="PomBase"/>
</dbReference>
<dbReference type="GO" id="GO:0019676">
    <property type="term" value="P:ammonia assimilation cycle"/>
    <property type="evidence" value="ECO:0000314"/>
    <property type="project" value="PomBase"/>
</dbReference>
<dbReference type="GO" id="GO:0006537">
    <property type="term" value="P:glutamate biosynthetic process"/>
    <property type="evidence" value="ECO:0000318"/>
    <property type="project" value="GO_Central"/>
</dbReference>
<dbReference type="GO" id="GO:0097054">
    <property type="term" value="P:L-glutamate biosynthetic process"/>
    <property type="evidence" value="ECO:0000269"/>
    <property type="project" value="PomBase"/>
</dbReference>
<dbReference type="CDD" id="cd05313">
    <property type="entry name" value="NAD_bind_2_Glu_DH"/>
    <property type="match status" value="1"/>
</dbReference>
<dbReference type="FunFam" id="1.10.285.10:FF:000001">
    <property type="entry name" value="Glutamate dehydrogenase"/>
    <property type="match status" value="1"/>
</dbReference>
<dbReference type="FunFam" id="1.10.285.10:FF:000003">
    <property type="entry name" value="Glutamate dehydrogenase"/>
    <property type="match status" value="1"/>
</dbReference>
<dbReference type="FunFam" id="3.40.50.10860:FF:000002">
    <property type="entry name" value="Glutamate dehydrogenase"/>
    <property type="match status" value="1"/>
</dbReference>
<dbReference type="FunFam" id="3.40.50.720:FF:000030">
    <property type="entry name" value="Glutamate dehydrogenase"/>
    <property type="match status" value="1"/>
</dbReference>
<dbReference type="Gene3D" id="1.10.285.10">
    <property type="entry name" value="Glutamate Dehydrogenase, chain A, domain 3"/>
    <property type="match status" value="2"/>
</dbReference>
<dbReference type="Gene3D" id="3.40.50.10860">
    <property type="entry name" value="Leucine Dehydrogenase, chain A, domain 1"/>
    <property type="match status" value="1"/>
</dbReference>
<dbReference type="Gene3D" id="3.40.50.720">
    <property type="entry name" value="NAD(P)-binding Rossmann-like Domain"/>
    <property type="match status" value="1"/>
</dbReference>
<dbReference type="InterPro" id="IPR046346">
    <property type="entry name" value="Aminoacid_DH-like_N_sf"/>
</dbReference>
<dbReference type="InterPro" id="IPR006095">
    <property type="entry name" value="Glu/Leu/Phe/Val/Trp_DH"/>
</dbReference>
<dbReference type="InterPro" id="IPR006096">
    <property type="entry name" value="Glu/Leu/Phe/Val/Trp_DH_C"/>
</dbReference>
<dbReference type="InterPro" id="IPR006097">
    <property type="entry name" value="Glu/Leu/Phe/Val/Trp_DH_dimer"/>
</dbReference>
<dbReference type="InterPro" id="IPR033524">
    <property type="entry name" value="Glu/Leu/Phe/Val_DH_AS"/>
</dbReference>
<dbReference type="InterPro" id="IPR014362">
    <property type="entry name" value="Glu_DH"/>
</dbReference>
<dbReference type="InterPro" id="IPR050724">
    <property type="entry name" value="Glu_Leu_Phe_Val_DH"/>
</dbReference>
<dbReference type="InterPro" id="IPR036291">
    <property type="entry name" value="NAD(P)-bd_dom_sf"/>
</dbReference>
<dbReference type="InterPro" id="IPR033922">
    <property type="entry name" value="NAD_bind_Glu_DH"/>
</dbReference>
<dbReference type="NCBIfam" id="NF006929">
    <property type="entry name" value="PRK09414.1"/>
    <property type="match status" value="1"/>
</dbReference>
<dbReference type="PANTHER" id="PTHR43571">
    <property type="entry name" value="NADP-SPECIFIC GLUTAMATE DEHYDROGENASE 1-RELATED"/>
    <property type="match status" value="1"/>
</dbReference>
<dbReference type="PANTHER" id="PTHR43571:SF1">
    <property type="entry name" value="NADP-SPECIFIC GLUTAMATE DEHYDROGENASE 1-RELATED"/>
    <property type="match status" value="1"/>
</dbReference>
<dbReference type="Pfam" id="PF00208">
    <property type="entry name" value="ELFV_dehydrog"/>
    <property type="match status" value="1"/>
</dbReference>
<dbReference type="Pfam" id="PF02812">
    <property type="entry name" value="ELFV_dehydrog_N"/>
    <property type="match status" value="1"/>
</dbReference>
<dbReference type="PIRSF" id="PIRSF000185">
    <property type="entry name" value="Glu_DH"/>
    <property type="match status" value="1"/>
</dbReference>
<dbReference type="PRINTS" id="PR00082">
    <property type="entry name" value="GLFDHDRGNASE"/>
</dbReference>
<dbReference type="SMART" id="SM00839">
    <property type="entry name" value="ELFV_dehydrog"/>
    <property type="match status" value="1"/>
</dbReference>
<dbReference type="SUPFAM" id="SSF53223">
    <property type="entry name" value="Aminoacid dehydrogenase-like, N-terminal domain"/>
    <property type="match status" value="1"/>
</dbReference>
<dbReference type="SUPFAM" id="SSF51735">
    <property type="entry name" value="NAD(P)-binding Rossmann-fold domains"/>
    <property type="match status" value="1"/>
</dbReference>
<dbReference type="PROSITE" id="PS00074">
    <property type="entry name" value="GLFV_DEHYDROGENASE"/>
    <property type="match status" value="1"/>
</dbReference>
<gene>
    <name type="primary">gdh1</name>
    <name type="ORF">SPCC622.12c</name>
</gene>
<evidence type="ECO:0000250" key="1"/>
<evidence type="ECO:0000255" key="2">
    <source>
        <dbReference type="PROSITE-ProRule" id="PRU10011"/>
    </source>
</evidence>
<evidence type="ECO:0000269" key="3">
    <source>
    </source>
</evidence>
<evidence type="ECO:0000305" key="4"/>
<organism>
    <name type="scientific">Schizosaccharomyces pombe (strain 972 / ATCC 24843)</name>
    <name type="common">Fission yeast</name>
    <dbReference type="NCBI Taxonomy" id="284812"/>
    <lineage>
        <taxon>Eukaryota</taxon>
        <taxon>Fungi</taxon>
        <taxon>Dikarya</taxon>
        <taxon>Ascomycota</taxon>
        <taxon>Taphrinomycotina</taxon>
        <taxon>Schizosaccharomycetes</taxon>
        <taxon>Schizosaccharomycetales</taxon>
        <taxon>Schizosaccharomycetaceae</taxon>
        <taxon>Schizosaccharomyces</taxon>
    </lineage>
</organism>
<accession>P78804</accession>
<comment type="catalytic activity">
    <reaction>
        <text>L-glutamate + NADP(+) + H2O = 2-oxoglutarate + NH4(+) + NADPH + H(+)</text>
        <dbReference type="Rhea" id="RHEA:11612"/>
        <dbReference type="ChEBI" id="CHEBI:15377"/>
        <dbReference type="ChEBI" id="CHEBI:15378"/>
        <dbReference type="ChEBI" id="CHEBI:16810"/>
        <dbReference type="ChEBI" id="CHEBI:28938"/>
        <dbReference type="ChEBI" id="CHEBI:29985"/>
        <dbReference type="ChEBI" id="CHEBI:57783"/>
        <dbReference type="ChEBI" id="CHEBI:58349"/>
        <dbReference type="EC" id="1.4.1.4"/>
    </reaction>
</comment>
<comment type="subunit">
    <text evidence="1">Homohexamer.</text>
</comment>
<comment type="similarity">
    <text evidence="4">Belongs to the Glu/Leu/Phe/Val dehydrogenases family.</text>
</comment>
<proteinExistence type="evidence at protein level"/>
<keyword id="KW-0521">NADP</keyword>
<keyword id="KW-0560">Oxidoreductase</keyword>
<keyword id="KW-0597">Phosphoprotein</keyword>
<keyword id="KW-1185">Reference proteome</keyword>
<reference key="1">
    <citation type="journal article" date="2002" name="Nature">
        <title>The genome sequence of Schizosaccharomyces pombe.</title>
        <authorList>
            <person name="Wood V."/>
            <person name="Gwilliam R."/>
            <person name="Rajandream M.A."/>
            <person name="Lyne M.H."/>
            <person name="Lyne R."/>
            <person name="Stewart A."/>
            <person name="Sgouros J.G."/>
            <person name="Peat N."/>
            <person name="Hayles J."/>
            <person name="Baker S.G."/>
            <person name="Basham D."/>
            <person name="Bowman S."/>
            <person name="Brooks K."/>
            <person name="Brown D."/>
            <person name="Brown S."/>
            <person name="Chillingworth T."/>
            <person name="Churcher C.M."/>
            <person name="Collins M."/>
            <person name="Connor R."/>
            <person name="Cronin A."/>
            <person name="Davis P."/>
            <person name="Feltwell T."/>
            <person name="Fraser A."/>
            <person name="Gentles S."/>
            <person name="Goble A."/>
            <person name="Hamlin N."/>
            <person name="Harris D.E."/>
            <person name="Hidalgo J."/>
            <person name="Hodgson G."/>
            <person name="Holroyd S."/>
            <person name="Hornsby T."/>
            <person name="Howarth S."/>
            <person name="Huckle E.J."/>
            <person name="Hunt S."/>
            <person name="Jagels K."/>
            <person name="James K.D."/>
            <person name="Jones L."/>
            <person name="Jones M."/>
            <person name="Leather S."/>
            <person name="McDonald S."/>
            <person name="McLean J."/>
            <person name="Mooney P."/>
            <person name="Moule S."/>
            <person name="Mungall K.L."/>
            <person name="Murphy L.D."/>
            <person name="Niblett D."/>
            <person name="Odell C."/>
            <person name="Oliver K."/>
            <person name="O'Neil S."/>
            <person name="Pearson D."/>
            <person name="Quail M.A."/>
            <person name="Rabbinowitsch E."/>
            <person name="Rutherford K.M."/>
            <person name="Rutter S."/>
            <person name="Saunders D."/>
            <person name="Seeger K."/>
            <person name="Sharp S."/>
            <person name="Skelton J."/>
            <person name="Simmonds M.N."/>
            <person name="Squares R."/>
            <person name="Squares S."/>
            <person name="Stevens K."/>
            <person name="Taylor K."/>
            <person name="Taylor R.G."/>
            <person name="Tivey A."/>
            <person name="Walsh S.V."/>
            <person name="Warren T."/>
            <person name="Whitehead S."/>
            <person name="Woodward J.R."/>
            <person name="Volckaert G."/>
            <person name="Aert R."/>
            <person name="Robben J."/>
            <person name="Grymonprez B."/>
            <person name="Weltjens I."/>
            <person name="Vanstreels E."/>
            <person name="Rieger M."/>
            <person name="Schaefer M."/>
            <person name="Mueller-Auer S."/>
            <person name="Gabel C."/>
            <person name="Fuchs M."/>
            <person name="Duesterhoeft A."/>
            <person name="Fritzc C."/>
            <person name="Holzer E."/>
            <person name="Moestl D."/>
            <person name="Hilbert H."/>
            <person name="Borzym K."/>
            <person name="Langer I."/>
            <person name="Beck A."/>
            <person name="Lehrach H."/>
            <person name="Reinhardt R."/>
            <person name="Pohl T.M."/>
            <person name="Eger P."/>
            <person name="Zimmermann W."/>
            <person name="Wedler H."/>
            <person name="Wambutt R."/>
            <person name="Purnelle B."/>
            <person name="Goffeau A."/>
            <person name="Cadieu E."/>
            <person name="Dreano S."/>
            <person name="Gloux S."/>
            <person name="Lelaure V."/>
            <person name="Mottier S."/>
            <person name="Galibert F."/>
            <person name="Aves S.J."/>
            <person name="Xiang Z."/>
            <person name="Hunt C."/>
            <person name="Moore K."/>
            <person name="Hurst S.M."/>
            <person name="Lucas M."/>
            <person name="Rochet M."/>
            <person name="Gaillardin C."/>
            <person name="Tallada V.A."/>
            <person name="Garzon A."/>
            <person name="Thode G."/>
            <person name="Daga R.R."/>
            <person name="Cruzado L."/>
            <person name="Jimenez J."/>
            <person name="Sanchez M."/>
            <person name="del Rey F."/>
            <person name="Benito J."/>
            <person name="Dominguez A."/>
            <person name="Revuelta J.L."/>
            <person name="Moreno S."/>
            <person name="Armstrong J."/>
            <person name="Forsburg S.L."/>
            <person name="Cerutti L."/>
            <person name="Lowe T."/>
            <person name="McCombie W.R."/>
            <person name="Paulsen I."/>
            <person name="Potashkin J."/>
            <person name="Shpakovski G.V."/>
            <person name="Ussery D."/>
            <person name="Barrell B.G."/>
            <person name="Nurse P."/>
        </authorList>
    </citation>
    <scope>NUCLEOTIDE SEQUENCE [LARGE SCALE GENOMIC DNA]</scope>
    <source>
        <strain>972 / ATCC 24843</strain>
    </source>
</reference>
<reference key="2">
    <citation type="journal article" date="1997" name="DNA Res.">
        <title>Identification of open reading frames in Schizosaccharomyces pombe cDNAs.</title>
        <authorList>
            <person name="Yoshioka S."/>
            <person name="Kato K."/>
            <person name="Nakai K."/>
            <person name="Okayama H."/>
            <person name="Nojima H."/>
        </authorList>
    </citation>
    <scope>NUCLEOTIDE SEQUENCE [LARGE SCALE MRNA] OF 1-447</scope>
    <source>
        <strain>PR745</strain>
    </source>
</reference>
<reference key="3">
    <citation type="journal article" date="2008" name="J. Proteome Res.">
        <title>Phosphoproteome analysis of fission yeast.</title>
        <authorList>
            <person name="Wilson-Grady J.T."/>
            <person name="Villen J."/>
            <person name="Gygi S.P."/>
        </authorList>
    </citation>
    <scope>PHOSPHORYLATION [LARGE SCALE ANALYSIS] AT SER-252</scope>
    <scope>IDENTIFICATION BY MASS SPECTROMETRY</scope>
</reference>